<keyword id="KW-0067">ATP-binding</keyword>
<keyword id="KW-1003">Cell membrane</keyword>
<keyword id="KW-0325">Glycoprotein</keyword>
<keyword id="KW-0472">Membrane</keyword>
<keyword id="KW-0547">Nucleotide-binding</keyword>
<keyword id="KW-0812">Transmembrane</keyword>
<keyword id="KW-1133">Transmembrane helix</keyword>
<keyword id="KW-0813">Transport</keyword>
<feature type="chain" id="PRO_0000461621" description="ABC-type transporter MDR1">
    <location>
        <begin position="1"/>
        <end position="1350"/>
    </location>
</feature>
<feature type="transmembrane region" description="Helical" evidence="1 3">
    <location>
        <begin position="124"/>
        <end position="144"/>
    </location>
</feature>
<feature type="transmembrane region" description="Helical" evidence="1 3">
    <location>
        <begin position="170"/>
        <end position="190"/>
    </location>
</feature>
<feature type="transmembrane region" description="Helical" evidence="1 3">
    <location>
        <begin position="243"/>
        <end position="263"/>
    </location>
</feature>
<feature type="transmembrane region" description="Helical" evidence="1 3">
    <location>
        <begin position="271"/>
        <end position="291"/>
    </location>
</feature>
<feature type="transmembrane region" description="Helical" evidence="1 3">
    <location>
        <begin position="350"/>
        <end position="370"/>
    </location>
</feature>
<feature type="transmembrane region" description="Helical" evidence="1 3">
    <location>
        <begin position="380"/>
        <end position="400"/>
    </location>
</feature>
<feature type="transmembrane region" description="Helical" evidence="1 3">
    <location>
        <begin position="779"/>
        <end position="799"/>
    </location>
</feature>
<feature type="transmembrane region" description="Helical" evidence="1 3">
    <location>
        <begin position="830"/>
        <end position="850"/>
    </location>
</feature>
<feature type="transmembrane region" description="Helical" evidence="1 3">
    <location>
        <begin position="903"/>
        <end position="923"/>
    </location>
</feature>
<feature type="transmembrane region" description="Helical" evidence="1 3">
    <location>
        <begin position="929"/>
        <end position="949"/>
    </location>
</feature>
<feature type="transmembrane region" description="Helical" evidence="1 3">
    <location>
        <begin position="1014"/>
        <end position="1034"/>
    </location>
</feature>
<feature type="transmembrane region" description="Helical" evidence="1 3">
    <location>
        <begin position="1044"/>
        <end position="1064"/>
    </location>
</feature>
<feature type="domain" description="ABC transmembrane type-1 1" evidence="3">
    <location>
        <begin position="121"/>
        <end position="411"/>
    </location>
</feature>
<feature type="domain" description="ABC transporter 1" evidence="2">
    <location>
        <begin position="446"/>
        <end position="691"/>
    </location>
</feature>
<feature type="domain" description="ABC transmembrane type-1 2" evidence="3">
    <location>
        <begin position="779"/>
        <end position="1070"/>
    </location>
</feature>
<feature type="domain" description="ABC transporter 2" evidence="2">
    <location>
        <begin position="1105"/>
        <end position="1343"/>
    </location>
</feature>
<feature type="region of interest" description="Disordered" evidence="5">
    <location>
        <begin position="1"/>
        <end position="84"/>
    </location>
</feature>
<feature type="region of interest" description="Disordered" evidence="5">
    <location>
        <begin position="712"/>
        <end position="734"/>
    </location>
</feature>
<feature type="compositionally biased region" description="Basic and acidic residues" evidence="5">
    <location>
        <begin position="1"/>
        <end position="11"/>
    </location>
</feature>
<feature type="compositionally biased region" description="Polar residues" evidence="5">
    <location>
        <begin position="22"/>
        <end position="33"/>
    </location>
</feature>
<feature type="compositionally biased region" description="Basic residues" evidence="5">
    <location>
        <begin position="52"/>
        <end position="63"/>
    </location>
</feature>
<feature type="compositionally biased region" description="Basic and acidic residues" evidence="5">
    <location>
        <begin position="712"/>
        <end position="731"/>
    </location>
</feature>
<feature type="binding site" evidence="2">
    <location>
        <begin position="481"/>
        <end position="488"/>
    </location>
    <ligand>
        <name>ATP</name>
        <dbReference type="ChEBI" id="CHEBI:30616"/>
    </ligand>
</feature>
<feature type="binding site" evidence="2">
    <location>
        <begin position="1140"/>
        <end position="1147"/>
    </location>
    <ligand>
        <name>ATP</name>
        <dbReference type="ChEBI" id="CHEBI:30616"/>
    </ligand>
</feature>
<feature type="glycosylation site" description="N-linked (GlcNAc...) asparagine" evidence="4">
    <location>
        <position position="1127"/>
    </location>
</feature>
<dbReference type="EMBL" id="MF576065">
    <property type="protein sequence ID" value="AVI10165.1"/>
    <property type="molecule type" value="Genomic_DNA"/>
</dbReference>
<dbReference type="GO" id="GO:0005743">
    <property type="term" value="C:mitochondrial inner membrane"/>
    <property type="evidence" value="ECO:0007669"/>
    <property type="project" value="TreeGrafter"/>
</dbReference>
<dbReference type="GO" id="GO:0005886">
    <property type="term" value="C:plasma membrane"/>
    <property type="evidence" value="ECO:0007669"/>
    <property type="project" value="UniProtKB-SubCell"/>
</dbReference>
<dbReference type="GO" id="GO:0015421">
    <property type="term" value="F:ABC-type oligopeptide transporter activity"/>
    <property type="evidence" value="ECO:0007669"/>
    <property type="project" value="TreeGrafter"/>
</dbReference>
<dbReference type="GO" id="GO:0005524">
    <property type="term" value="F:ATP binding"/>
    <property type="evidence" value="ECO:0007669"/>
    <property type="project" value="UniProtKB-KW"/>
</dbReference>
<dbReference type="GO" id="GO:0016887">
    <property type="term" value="F:ATP hydrolysis activity"/>
    <property type="evidence" value="ECO:0007669"/>
    <property type="project" value="InterPro"/>
</dbReference>
<dbReference type="GO" id="GO:0090374">
    <property type="term" value="P:oligopeptide export from mitochondrion"/>
    <property type="evidence" value="ECO:0007669"/>
    <property type="project" value="TreeGrafter"/>
</dbReference>
<dbReference type="CDD" id="cd18577">
    <property type="entry name" value="ABC_6TM_Pgp_ABCB1_D1_like"/>
    <property type="match status" value="1"/>
</dbReference>
<dbReference type="CDD" id="cd18578">
    <property type="entry name" value="ABC_6TM_Pgp_ABCB1_D2_like"/>
    <property type="match status" value="1"/>
</dbReference>
<dbReference type="CDD" id="cd03249">
    <property type="entry name" value="ABC_MTABC3_MDL1_MDL2"/>
    <property type="match status" value="2"/>
</dbReference>
<dbReference type="FunFam" id="1.20.1560.10:FF:000102">
    <property type="entry name" value="ABC multidrug transporter Mdr1"/>
    <property type="match status" value="1"/>
</dbReference>
<dbReference type="FunFam" id="1.20.1560.10:FF:000009">
    <property type="entry name" value="ABC transporter B family member 1"/>
    <property type="match status" value="1"/>
</dbReference>
<dbReference type="FunFam" id="3.40.50.300:FF:000251">
    <property type="entry name" value="ABC transporter B family member 19"/>
    <property type="match status" value="1"/>
</dbReference>
<dbReference type="FunFam" id="3.40.50.300:FF:000302">
    <property type="entry name" value="ATP-binding cassette subfamily B member 5"/>
    <property type="match status" value="1"/>
</dbReference>
<dbReference type="Gene3D" id="1.20.1560.10">
    <property type="entry name" value="ABC transporter type 1, transmembrane domain"/>
    <property type="match status" value="1"/>
</dbReference>
<dbReference type="Gene3D" id="3.40.50.300">
    <property type="entry name" value="P-loop containing nucleotide triphosphate hydrolases"/>
    <property type="match status" value="2"/>
</dbReference>
<dbReference type="InterPro" id="IPR003593">
    <property type="entry name" value="AAA+_ATPase"/>
</dbReference>
<dbReference type="InterPro" id="IPR011527">
    <property type="entry name" value="ABC1_TM_dom"/>
</dbReference>
<dbReference type="InterPro" id="IPR036640">
    <property type="entry name" value="ABC1_TM_sf"/>
</dbReference>
<dbReference type="InterPro" id="IPR003439">
    <property type="entry name" value="ABC_transporter-like_ATP-bd"/>
</dbReference>
<dbReference type="InterPro" id="IPR017871">
    <property type="entry name" value="ABC_transporter-like_CS"/>
</dbReference>
<dbReference type="InterPro" id="IPR027417">
    <property type="entry name" value="P-loop_NTPase"/>
</dbReference>
<dbReference type="InterPro" id="IPR039421">
    <property type="entry name" value="Type_1_exporter"/>
</dbReference>
<dbReference type="PANTHER" id="PTHR43394">
    <property type="entry name" value="ATP-DEPENDENT PERMEASE MDL1, MITOCHONDRIAL"/>
    <property type="match status" value="1"/>
</dbReference>
<dbReference type="PANTHER" id="PTHR43394:SF27">
    <property type="entry name" value="ATP-DEPENDENT TRANSLOCASE ABCB1-LIKE"/>
    <property type="match status" value="1"/>
</dbReference>
<dbReference type="Pfam" id="PF00664">
    <property type="entry name" value="ABC_membrane"/>
    <property type="match status" value="2"/>
</dbReference>
<dbReference type="Pfam" id="PF00005">
    <property type="entry name" value="ABC_tran"/>
    <property type="match status" value="2"/>
</dbReference>
<dbReference type="SMART" id="SM00382">
    <property type="entry name" value="AAA"/>
    <property type="match status" value="2"/>
</dbReference>
<dbReference type="SUPFAM" id="SSF90123">
    <property type="entry name" value="ABC transporter transmembrane region"/>
    <property type="match status" value="2"/>
</dbReference>
<dbReference type="SUPFAM" id="SSF52540">
    <property type="entry name" value="P-loop containing nucleoside triphosphate hydrolases"/>
    <property type="match status" value="2"/>
</dbReference>
<dbReference type="PROSITE" id="PS50929">
    <property type="entry name" value="ABC_TM1F"/>
    <property type="match status" value="2"/>
</dbReference>
<dbReference type="PROSITE" id="PS00211">
    <property type="entry name" value="ABC_TRANSPORTER_1"/>
    <property type="match status" value="2"/>
</dbReference>
<dbReference type="PROSITE" id="PS50893">
    <property type="entry name" value="ABC_TRANSPORTER_2"/>
    <property type="match status" value="2"/>
</dbReference>
<name>MDR1_AURME</name>
<comment type="function">
    <text evidence="8">ABC-type transporter that is involved in the secretion of liamocins, glycolipids (also called heavy oils) composed of a single mannitol or arabitol headgroup linked to either three, four or even six 3,5-dihydroxydecanoic ester tail-groups.</text>
</comment>
<comment type="subcellular location">
    <subcellularLocation>
        <location evidence="13">Cell membrane</location>
        <topology evidence="1">Multi-pass membrane protein</topology>
    </subcellularLocation>
</comment>
<comment type="induction">
    <text evidence="9">Expression is regulated by the cAMP-PKA and HOG1 signaling pathways via the transcriptional activator MSN2.</text>
</comment>
<comment type="disruption phenotype">
    <text evidence="8">Partially loses the ability to secrete liamocins and leads swollen cells and accumulation of intracellular lipids.</text>
</comment>
<comment type="biotechnology">
    <text evidence="6 7">Liamocins have high bioactivity against the pathogenic bacteria Streptococcus spp. and can be potential new specific inhibitors of oral streptococcal biofilms without affecting normal oral microflora (PubMed:30627519). Liamocins are also able to inhibit human cancer cell lines such as breast cancer cell lines T47D and SK-BR3 or the cervical cancer cell line HeLa (PubMed:21293903).</text>
</comment>
<comment type="similarity">
    <text evidence="13">Belongs to the ABC transporter superfamily. ABCB family. Multidrug resistance exporter (TC 3.A.1.201) subfamily.</text>
</comment>
<gene>
    <name evidence="10" type="primary">MDR1</name>
</gene>
<reference key="1">
    <citation type="submission" date="2017-07" db="EMBL/GenBank/DDBJ databases">
        <authorList>
            <person name="Sun Z.S."/>
            <person name="Albrecht U."/>
            <person name="Echele G."/>
            <person name="Lee C.C."/>
        </authorList>
    </citation>
    <scope>NUCLEOTIDE SEQUENCE [GENOMIC DNA]</scope>
    <source>
        <strain>6-1-2</strain>
    </source>
</reference>
<reference key="2">
    <citation type="journal article" date="2011" name="Biotechnol. Lett.">
        <title>Heavy oils produced by Aureobasidium pullulans.</title>
        <authorList>
            <person name="Manitchotpisit P."/>
            <person name="Price N.P."/>
            <person name="Leathers T.D."/>
            <person name="Punnapayak H."/>
        </authorList>
    </citation>
    <scope>BIOTECHNOLOGY</scope>
</reference>
<reference key="3">
    <citation type="journal article" date="2019" name="Biotechnol. Rep.">
        <title>Inhibition of Streptococcus mutans and S. sobrinus biofilms by liamocins from Aureobasidium pullulans.</title>
        <authorList>
            <person name="Leathers T.D."/>
            <person name="Rich J.O."/>
            <person name="Bischoff K.M."/>
            <person name="Skory C.D."/>
            <person name="Nunnally M.S."/>
        </authorList>
    </citation>
    <scope>BIOTECHNOLOGY</scope>
</reference>
<reference key="4">
    <citation type="journal article" date="2020" name="Biochem. J.">
        <title>Genetic evidences for the core biosynthesis pathway, regulation, transport and secretion of liamocins in yeast-like fungal cells.</title>
        <authorList>
            <person name="Xue S.J."/>
            <person name="Liu G.L."/>
            <person name="Chi Z."/>
            <person name="Gao Z.C."/>
            <person name="Hu Z."/>
            <person name="Chi Z.M."/>
        </authorList>
    </citation>
    <scope>FUNCTION</scope>
    <scope>DISRUPTION PHENOTYPE</scope>
</reference>
<reference key="5">
    <citation type="journal article" date="2021" name="Enzyme Microb. Technol.">
        <title>cAMP-PKA and HOG1 signaling pathways regulate liamocin production by different ways via the transcriptional activator Msn2 in Aureobasidium melanogenum.</title>
        <authorList>
            <person name="Zhang M."/>
            <person name="Gao Z.C."/>
            <person name="Chi Z."/>
            <person name="Liu G.L."/>
            <person name="Hu Z."/>
            <person name="Chi Z.M."/>
        </authorList>
    </citation>
    <scope>INDUCTION</scope>
</reference>
<proteinExistence type="evidence at protein level"/>
<protein>
    <recommendedName>
        <fullName evidence="11">ABC-type transporter MDR1</fullName>
    </recommendedName>
    <alternativeName>
        <fullName evidence="12">Multidrug resistance protein 1</fullName>
    </alternativeName>
</protein>
<evidence type="ECO:0000255" key="1"/>
<evidence type="ECO:0000255" key="2">
    <source>
        <dbReference type="PROSITE-ProRule" id="PRU00434"/>
    </source>
</evidence>
<evidence type="ECO:0000255" key="3">
    <source>
        <dbReference type="PROSITE-ProRule" id="PRU00441"/>
    </source>
</evidence>
<evidence type="ECO:0000255" key="4">
    <source>
        <dbReference type="PROSITE-ProRule" id="PRU00498"/>
    </source>
</evidence>
<evidence type="ECO:0000256" key="5">
    <source>
        <dbReference type="SAM" id="MobiDB-lite"/>
    </source>
</evidence>
<evidence type="ECO:0000269" key="6">
    <source>
    </source>
</evidence>
<evidence type="ECO:0000269" key="7">
    <source>
    </source>
</evidence>
<evidence type="ECO:0000269" key="8">
    <source>
    </source>
</evidence>
<evidence type="ECO:0000269" key="9">
    <source>
    </source>
</evidence>
<evidence type="ECO:0000303" key="10">
    <source>
    </source>
</evidence>
<evidence type="ECO:0000303" key="11">
    <source>
    </source>
</evidence>
<evidence type="ECO:0000303" key="12">
    <source ref="1"/>
</evidence>
<evidence type="ECO:0000305" key="13"/>
<accession>A0A2P1AAV1</accession>
<organism>
    <name type="scientific">Aureobasidium melanogenum</name>
    <name type="common">Aureobasidium pullulans var. melanogenum</name>
    <dbReference type="NCBI Taxonomy" id="46634"/>
    <lineage>
        <taxon>Eukaryota</taxon>
        <taxon>Fungi</taxon>
        <taxon>Dikarya</taxon>
        <taxon>Ascomycota</taxon>
        <taxon>Pezizomycotina</taxon>
        <taxon>Dothideomycetes</taxon>
        <taxon>Dothideomycetidae</taxon>
        <taxon>Dothideales</taxon>
        <taxon>Saccotheciaceae</taxon>
        <taxon>Aureobasidium</taxon>
    </lineage>
</organism>
<sequence>MDTVHEGHHGSDSSSSGDTVNVEVTNYEKTQLGQAPLPLAPAPTPAVPVNEKKHKSQKEKKHKGQNEKQDKDSDDEGEDPFAHLPDHEKAVLKRQLDIPTVKVTYFMLFRYATLNDKLLMVLSALSSIIGGALLPLMTIVFGGLTTTFKDFFRQTITQEHFNHELSRFSLYFLYLAIGEFVFVYIATAGFLYTGEHVAGKIRENFLKAILRQNIAFFDQLGAGEITTRITSDTNLVQDGISEKVGLTLTALATFITAFVVSFIKDWKLTLILMSTVFAIVFTMGGMSGFIVKFNKASLASYAEGGTVAEEVISSVRNAKAFNTEAKLTRAYDAHLAVAEKWGFKMKAVTGSMIGFLMCYVYLNYSLAFWMGSRYLVSGRIEVGDVLTIILSIMIGAFALGNVAPNIQAFTTSVAAAAKIFATIDRVSPLDPSSESGETLKSVEGHIELRNIRHIYPSRPEVTVMEDVSLIVPAGKTTALVGESGSGKSTIVGLVERFYDPVGGTVYLDGQDISSLNLRWLRRQISLVSQEPTLFATTIFGNIRHGLIGTAYESESEEKIRELVENAARFANAHDFITGLPEGYATNVGERGFLLSGGQKQRIAIARAMVSDPKILLLDEATSALDTKSEGVVQAALDKAALGRTTIVIAHRLSTIKGADNIVVMSRGRIVEQGTHDALLEKQGAYYNLVEAQRIAAENENKDQEEVAILDEKDQNLKHETTKGEQPEDGLKLARTQTGKSQSSIVLADKKAEVENRYSLWTLIKVVAVFNRQEWLYMTIGIICSVITGGGNPTQAVFFAKAVTALSGDNSTPQGKATIRSQANFWSWMYFMLALVQFSAFLIQGYVFAVCSERLVHRAREQAFKTMLRQDIAFFDKEENTAGALTSFLSTETTHLAGMSGVTLGTILSVIVTLVAAFSVSLAIQWKLSLVCISTVPILLACGFLRFWMLARFQATAKKAYEKSASYACEATSAIRTVASLTREDDVHLHYHDQLVDQERKSLISILRSSSLYAASQSLIFCCTALGFWYGGTLIAKKEIGQFQFFLCFSAVIFGAQSAGTIFSFAPDMGKAKQAAAELKALFDRKPEIDSWSEDGEQLSSVEGHIEFRDVHFRYPTRPEQPVLRGLNLTVKPGQYVALVGASGCGKSTTIQLLERFYDPLAGGVYIDGKEVSSLNVNNYRSWIALVSQEPTLYQGTVKENILLGADRENVPQEAIEQACRDANIYDFIMSLPDAFDTIVGSKGSMLSGGQKQRIAIARALLRDPKILLLDEATSALDSESEKVVQAALDKAAKGRTTIAVAHRLSTIQRADMIYVFDAGKVVESGTHTELIHLRGRYWELVNLQSLGKAQ</sequence>